<gene>
    <name evidence="1" type="primary">ureH</name>
    <name type="ordered locus">HH_0413</name>
</gene>
<feature type="chain" id="PRO_0000346567" description="Urease accessory protein UreH">
    <location>
        <begin position="1"/>
        <end position="252"/>
    </location>
</feature>
<comment type="function">
    <text evidence="1">Required for maturation of urease via the functional incorporation of the urease nickel metallocenter.</text>
</comment>
<comment type="subunit">
    <text evidence="1">UreH, UreF and UreG form a complex that acts as a GTP-hydrolysis-dependent molecular chaperone, activating the urease apoprotein by helping to assemble the nickel containing metallocenter of UreC. The UreE protein probably delivers the nickel.</text>
</comment>
<comment type="subcellular location">
    <subcellularLocation>
        <location evidence="1">Cytoplasm</location>
    </subcellularLocation>
</comment>
<comment type="similarity">
    <text evidence="1">Belongs to the UreD family.</text>
</comment>
<comment type="sequence caution" evidence="2">
    <conflict type="erroneous initiation">
        <sequence resource="EMBL-CDS" id="AAP77010"/>
    </conflict>
</comment>
<evidence type="ECO:0000255" key="1">
    <source>
        <dbReference type="HAMAP-Rule" id="MF_01384"/>
    </source>
</evidence>
<evidence type="ECO:0000305" key="2"/>
<accession>Q7VJ35</accession>
<proteinExistence type="inferred from homology"/>
<keyword id="KW-0143">Chaperone</keyword>
<keyword id="KW-0963">Cytoplasm</keyword>
<keyword id="KW-0996">Nickel insertion</keyword>
<keyword id="KW-1185">Reference proteome</keyword>
<sequence>MSSFAQKSILKLKTKRGLNGKNIIEEMFFTPPLKIISPLEDEDIAEIMLISVSAGLLKDDCQDIQIHIGKESKIRLISQSYEKIHDTQDGYASKHTQITIEENAFLDYAPLPILPFKDSSFKNTTDIYLSKNARLHYSEIICAGRVAMGEIFDFSELSSRLRIYKENHLVFFENMNLKPAQMAMQNICLFDKYTHALSMVIFDDLIEVQALEQKIKNSSLNVGISTNNGGIIIKALDNQSERLLQFKKDLAL</sequence>
<reference key="1">
    <citation type="journal article" date="2003" name="Proc. Natl. Acad. Sci. U.S.A.">
        <title>The complete genome sequence of the carcinogenic bacterium Helicobacter hepaticus.</title>
        <authorList>
            <person name="Suerbaum S."/>
            <person name="Josenhans C."/>
            <person name="Sterzenbach T."/>
            <person name="Drescher B."/>
            <person name="Brandt P."/>
            <person name="Bell M."/>
            <person name="Droege M."/>
            <person name="Fartmann B."/>
            <person name="Fischer H.-P."/>
            <person name="Ge Z."/>
            <person name="Hoerster A."/>
            <person name="Holland R."/>
            <person name="Klein K."/>
            <person name="Koenig J."/>
            <person name="Macko L."/>
            <person name="Mendz G.L."/>
            <person name="Nyakatura G."/>
            <person name="Schauer D.B."/>
            <person name="Shen Z."/>
            <person name="Weber J."/>
            <person name="Frosch M."/>
            <person name="Fox J.G."/>
        </authorList>
    </citation>
    <scope>NUCLEOTIDE SEQUENCE [LARGE SCALE GENOMIC DNA]</scope>
    <source>
        <strain>ATCC 51449 / 3B1</strain>
    </source>
</reference>
<organism>
    <name type="scientific">Helicobacter hepaticus (strain ATCC 51449 / 3B1)</name>
    <dbReference type="NCBI Taxonomy" id="235279"/>
    <lineage>
        <taxon>Bacteria</taxon>
        <taxon>Pseudomonadati</taxon>
        <taxon>Campylobacterota</taxon>
        <taxon>Epsilonproteobacteria</taxon>
        <taxon>Campylobacterales</taxon>
        <taxon>Helicobacteraceae</taxon>
        <taxon>Helicobacter</taxon>
    </lineage>
</organism>
<name>UREH_HELHP</name>
<protein>
    <recommendedName>
        <fullName evidence="1">Urease accessory protein UreH</fullName>
    </recommendedName>
</protein>
<dbReference type="EMBL" id="AE017125">
    <property type="protein sequence ID" value="AAP77010.1"/>
    <property type="status" value="ALT_INIT"/>
    <property type="molecule type" value="Genomic_DNA"/>
</dbReference>
<dbReference type="RefSeq" id="WP_041308970.1">
    <property type="nucleotide sequence ID" value="NC_004917.1"/>
</dbReference>
<dbReference type="SMR" id="Q7VJ35"/>
<dbReference type="STRING" id="235279.HH_0413"/>
<dbReference type="KEGG" id="hhe:HH_0413"/>
<dbReference type="eggNOG" id="COG0829">
    <property type="taxonomic scope" value="Bacteria"/>
</dbReference>
<dbReference type="HOGENOM" id="CLU_056339_6_1_7"/>
<dbReference type="OrthoDB" id="5328682at2"/>
<dbReference type="Proteomes" id="UP000002495">
    <property type="component" value="Chromosome"/>
</dbReference>
<dbReference type="GO" id="GO:0005737">
    <property type="term" value="C:cytoplasm"/>
    <property type="evidence" value="ECO:0007669"/>
    <property type="project" value="UniProtKB-SubCell"/>
</dbReference>
<dbReference type="GO" id="GO:0016151">
    <property type="term" value="F:nickel cation binding"/>
    <property type="evidence" value="ECO:0007669"/>
    <property type="project" value="InterPro"/>
</dbReference>
<dbReference type="HAMAP" id="MF_01384">
    <property type="entry name" value="UreD"/>
    <property type="match status" value="1"/>
</dbReference>
<dbReference type="InterPro" id="IPR002669">
    <property type="entry name" value="UreD"/>
</dbReference>
<dbReference type="PANTHER" id="PTHR33643">
    <property type="entry name" value="UREASE ACCESSORY PROTEIN D"/>
    <property type="match status" value="1"/>
</dbReference>
<dbReference type="PANTHER" id="PTHR33643:SF1">
    <property type="entry name" value="UREASE ACCESSORY PROTEIN D"/>
    <property type="match status" value="1"/>
</dbReference>
<dbReference type="Pfam" id="PF01774">
    <property type="entry name" value="UreD"/>
    <property type="match status" value="1"/>
</dbReference>